<evidence type="ECO:0000250" key="1"/>
<evidence type="ECO:0000256" key="2">
    <source>
        <dbReference type="SAM" id="MobiDB-lite"/>
    </source>
</evidence>
<evidence type="ECO:0000305" key="3"/>
<evidence type="ECO:0007829" key="4">
    <source>
        <dbReference type="PDB" id="4D7X"/>
    </source>
</evidence>
<comment type="function">
    <text evidence="1">Component of the Mediator complex, a coactivator involved in regulated gene transcription of nearly all RNA polymerase II-dependent genes. Mediator functions as a bridge to convey information from gene-specific regulatory proteins to the basal RNA polymerase II transcription machinery. Mediator is recruited to promoters by direct interactions with regulatory proteins and serves as a scaffold for the assembly of a functional preinitiation complex with RNA polymerase II and the general transcription factors (By similarity).</text>
</comment>
<comment type="subunit">
    <text evidence="1">Component of the Mediator complex.</text>
</comment>
<comment type="subcellular location">
    <subcellularLocation>
        <location evidence="1">Nucleus</location>
    </subcellularLocation>
</comment>
<comment type="similarity">
    <text evidence="3">Belongs to the Mediator complex subunit 15 family.</text>
</comment>
<gene>
    <name type="primary">GAL11</name>
    <name type="synonym">MED15</name>
    <name type="ordered locus">CAGL0H06215g</name>
</gene>
<sequence>MSSKETIPMHQRSQNVAELLTVLMDINKINGGDSTTAEKMKVHAKSFEAALFEKSSSKEEYQKTMKSKIDAMRSTRDKRKRESVGSASMMANLGQDGTNNNNNNNNNNNNNLNMAASFMGGDMFGRNQSPAQNSNANTNLNTNVGPGVNGPNGNDGTANPQMFMNQQAQARQQAAARQLKNRQMGGSSAQQQQLTQQQQQLLNQMRVAPIPKELLQRIPNLPPGVTTWEQVTALAQQNRLSAQDMSIAKDIYKIHQQYLIKAKLQQQQQRQQQQRQQGNPDVNNNMAGSNNNNNNNLPMAQQQMQQRQQQQQQSQQQQNRNPNQRHNVLSQINQMFTADEQRALLQEAMEACKNFQKTHFGGQMSDANKQAFIKKFINSKALKKLEAMRMAQGGNNNANLNKGQADMLQRQQANMQMNQQQQRAAQNQRRGPVMNDAVSQGYNNQMNSAADSTMNNSNQPMNIGNNGVNMIPNQSQQQQQTNRPKEQTPQQPQQRIQSNRSVPMLNPTPEDVEVVRRISAEAAKTQLRLTDLTNSLTPQERDEIKKRLQKNQQLFAQVSSYAPQVYLFTKSESFLKEVLQLRIFIKEILEKCSKGIYVVKLDTVDKLVIKYQKYWESMKIQLLRRQQLLQQQQQQQQQGMDPNRAQNSQQQQQQNQANMQQARNRKPTKNQTTPAIAASVAMNMNDKGASMSPALQKAGSAVPNFAQQMSPNMTPGTIPPTNVLSPHSQSHIPMVSPTMAKAASAAALKNDTASSSRRGSTKPRGKSTAPVTGKKTSNAPTPQVVPATVPSTTNLSAAGTPNIRNKSATPLTAGLSPKSTIRSNSNTALASAKTPSPMTVSIPQPGNSSVFKKEEEYLSKLQLRKEEIRFRQKQRLDILSSSPVDLFLTTVADCLGINDEEIELINKIPETTADNINNTGKKKLTKAAQKLRDKEILNVSIQVGEKDKLIMSSKAPDKVMDYSISAMSLAAVFKNLSSTGSLNNIALSGSNATTSKDIGNIYSHTGGVKRKFDEVEISPNSNGSPSASIMSESKKIKIDSPEDMFVTHSSEAAKGTNNSSLMDSGKEGSCKSMAGSATEVNDTSIWDWNFWTSIE</sequence>
<organism>
    <name type="scientific">Candida glabrata (strain ATCC 2001 / BCRC 20586 / JCM 3761 / NBRC 0622 / NRRL Y-65 / CBS 138)</name>
    <name type="common">Yeast</name>
    <name type="synonym">Nakaseomyces glabratus</name>
    <dbReference type="NCBI Taxonomy" id="284593"/>
    <lineage>
        <taxon>Eukaryota</taxon>
        <taxon>Fungi</taxon>
        <taxon>Dikarya</taxon>
        <taxon>Ascomycota</taxon>
        <taxon>Saccharomycotina</taxon>
        <taxon>Saccharomycetes</taxon>
        <taxon>Saccharomycetales</taxon>
        <taxon>Saccharomycetaceae</taxon>
        <taxon>Nakaseomyces</taxon>
    </lineage>
</organism>
<protein>
    <recommendedName>
        <fullName>Mediator of RNA polymerase II transcription subunit 15</fullName>
    </recommendedName>
    <alternativeName>
        <fullName>Mediator complex subunit 15</fullName>
    </alternativeName>
    <alternativeName>
        <fullName>Transcription regulatory protein GAL11</fullName>
    </alternativeName>
</protein>
<feature type="chain" id="PRO_0000304671" description="Mediator of RNA polymerase II transcription subunit 15">
    <location>
        <begin position="1"/>
        <end position="1095"/>
    </location>
</feature>
<feature type="region of interest" description="Disordered" evidence="2">
    <location>
        <begin position="66"/>
        <end position="197"/>
    </location>
</feature>
<feature type="region of interest" description="Disordered" evidence="2">
    <location>
        <begin position="265"/>
        <end position="323"/>
    </location>
</feature>
<feature type="region of interest" description="Disordered" evidence="2">
    <location>
        <begin position="448"/>
        <end position="508"/>
    </location>
</feature>
<feature type="region of interest" description="Disordered" evidence="2">
    <location>
        <begin position="633"/>
        <end position="672"/>
    </location>
</feature>
<feature type="region of interest" description="Disordered" evidence="2">
    <location>
        <begin position="737"/>
        <end position="847"/>
    </location>
</feature>
<feature type="region of interest" description="Disordered" evidence="2">
    <location>
        <begin position="1050"/>
        <end position="1075"/>
    </location>
</feature>
<feature type="compositionally biased region" description="Basic and acidic residues" evidence="2">
    <location>
        <begin position="66"/>
        <end position="83"/>
    </location>
</feature>
<feature type="compositionally biased region" description="Low complexity" evidence="2">
    <location>
        <begin position="99"/>
        <end position="113"/>
    </location>
</feature>
<feature type="compositionally biased region" description="Low complexity" evidence="2">
    <location>
        <begin position="133"/>
        <end position="154"/>
    </location>
</feature>
<feature type="compositionally biased region" description="Polar residues" evidence="2">
    <location>
        <begin position="155"/>
        <end position="165"/>
    </location>
</feature>
<feature type="compositionally biased region" description="Low complexity" evidence="2">
    <location>
        <begin position="166"/>
        <end position="178"/>
    </location>
</feature>
<feature type="compositionally biased region" description="Polar residues" evidence="2">
    <location>
        <begin position="448"/>
        <end position="473"/>
    </location>
</feature>
<feature type="compositionally biased region" description="Low complexity" evidence="2">
    <location>
        <begin position="487"/>
        <end position="500"/>
    </location>
</feature>
<feature type="compositionally biased region" description="Low complexity" evidence="2">
    <location>
        <begin position="633"/>
        <end position="662"/>
    </location>
</feature>
<feature type="compositionally biased region" description="Low complexity" evidence="2">
    <location>
        <begin position="780"/>
        <end position="793"/>
    </location>
</feature>
<feature type="compositionally biased region" description="Polar residues" evidence="2">
    <location>
        <begin position="794"/>
        <end position="810"/>
    </location>
</feature>
<feature type="compositionally biased region" description="Polar residues" evidence="2">
    <location>
        <begin position="817"/>
        <end position="847"/>
    </location>
</feature>
<feature type="compositionally biased region" description="Polar residues" evidence="2">
    <location>
        <begin position="1050"/>
        <end position="1062"/>
    </location>
</feature>
<feature type="helix" evidence="4">
    <location>
        <begin position="2"/>
        <end position="5"/>
    </location>
</feature>
<feature type="helix" evidence="4">
    <location>
        <begin position="9"/>
        <end position="29"/>
    </location>
</feature>
<feature type="helix" evidence="4">
    <location>
        <begin position="34"/>
        <end position="52"/>
    </location>
</feature>
<feature type="helix" evidence="4">
    <location>
        <begin position="58"/>
        <end position="84"/>
    </location>
</feature>
<reference key="1">
    <citation type="journal article" date="2004" name="Nature">
        <title>Genome evolution in yeasts.</title>
        <authorList>
            <person name="Dujon B."/>
            <person name="Sherman D."/>
            <person name="Fischer G."/>
            <person name="Durrens P."/>
            <person name="Casaregola S."/>
            <person name="Lafontaine I."/>
            <person name="de Montigny J."/>
            <person name="Marck C."/>
            <person name="Neuveglise C."/>
            <person name="Talla E."/>
            <person name="Goffard N."/>
            <person name="Frangeul L."/>
            <person name="Aigle M."/>
            <person name="Anthouard V."/>
            <person name="Babour A."/>
            <person name="Barbe V."/>
            <person name="Barnay S."/>
            <person name="Blanchin S."/>
            <person name="Beckerich J.-M."/>
            <person name="Beyne E."/>
            <person name="Bleykasten C."/>
            <person name="Boisrame A."/>
            <person name="Boyer J."/>
            <person name="Cattolico L."/>
            <person name="Confanioleri F."/>
            <person name="de Daruvar A."/>
            <person name="Despons L."/>
            <person name="Fabre E."/>
            <person name="Fairhead C."/>
            <person name="Ferry-Dumazet H."/>
            <person name="Groppi A."/>
            <person name="Hantraye F."/>
            <person name="Hennequin C."/>
            <person name="Jauniaux N."/>
            <person name="Joyet P."/>
            <person name="Kachouri R."/>
            <person name="Kerrest A."/>
            <person name="Koszul R."/>
            <person name="Lemaire M."/>
            <person name="Lesur I."/>
            <person name="Ma L."/>
            <person name="Muller H."/>
            <person name="Nicaud J.-M."/>
            <person name="Nikolski M."/>
            <person name="Oztas S."/>
            <person name="Ozier-Kalogeropoulos O."/>
            <person name="Pellenz S."/>
            <person name="Potier S."/>
            <person name="Richard G.-F."/>
            <person name="Straub M.-L."/>
            <person name="Suleau A."/>
            <person name="Swennen D."/>
            <person name="Tekaia F."/>
            <person name="Wesolowski-Louvel M."/>
            <person name="Westhof E."/>
            <person name="Wirth B."/>
            <person name="Zeniou-Meyer M."/>
            <person name="Zivanovic Y."/>
            <person name="Bolotin-Fukuhara M."/>
            <person name="Thierry A."/>
            <person name="Bouchier C."/>
            <person name="Caudron B."/>
            <person name="Scarpelli C."/>
            <person name="Gaillardin C."/>
            <person name="Weissenbach J."/>
            <person name="Wincker P."/>
            <person name="Souciet J.-L."/>
        </authorList>
    </citation>
    <scope>NUCLEOTIDE SEQUENCE [LARGE SCALE GENOMIC DNA]</scope>
    <source>
        <strain>ATCC 2001 / BCRC 20586 / JCM 3761 / NBRC 0622 / NRRL Y-65 / CBS 138</strain>
    </source>
</reference>
<dbReference type="EMBL" id="CR380954">
    <property type="protein sequence ID" value="CAG59998.1"/>
    <property type="molecule type" value="Genomic_DNA"/>
</dbReference>
<dbReference type="PDB" id="4D7X">
    <property type="method" value="NMR"/>
    <property type="chains" value="A=1-86"/>
</dbReference>
<dbReference type="PDBsum" id="4D7X"/>
<dbReference type="BMRB" id="Q6FRS9"/>
<dbReference type="SMR" id="Q6FRS9"/>
<dbReference type="DIP" id="DIP-59822N"/>
<dbReference type="FunCoup" id="Q6FRS9">
    <property type="interactions" value="273"/>
</dbReference>
<dbReference type="IntAct" id="Q6FRS9">
    <property type="interactions" value="1"/>
</dbReference>
<dbReference type="STRING" id="284593.Q6FRS9"/>
<dbReference type="BindingDB" id="Q6FRS9"/>
<dbReference type="ChEMBL" id="CHEMBL4295608"/>
<dbReference type="EnsemblFungi" id="CAGL0H06215g-T">
    <property type="protein sequence ID" value="CAGL0H06215g-T-p1"/>
    <property type="gene ID" value="CAGL0H06215g"/>
</dbReference>
<dbReference type="KEGG" id="cgr:2888816"/>
<dbReference type="CGD" id="CAL0131746">
    <property type="gene designation" value="GAL11A"/>
</dbReference>
<dbReference type="VEuPathDB" id="FungiDB:CAGL0H06215g"/>
<dbReference type="eggNOG" id="ENOG502QVXD">
    <property type="taxonomic scope" value="Eukaryota"/>
</dbReference>
<dbReference type="HOGENOM" id="CLU_009962_0_0_1"/>
<dbReference type="InParanoid" id="Q6FRS9"/>
<dbReference type="OMA" id="RYQKYYE"/>
<dbReference type="Proteomes" id="UP000002428">
    <property type="component" value="Chromosome H"/>
</dbReference>
<dbReference type="GO" id="GO:0016592">
    <property type="term" value="C:mediator complex"/>
    <property type="evidence" value="ECO:0007669"/>
    <property type="project" value="InterPro"/>
</dbReference>
<dbReference type="GO" id="GO:0003712">
    <property type="term" value="F:transcription coregulator activity"/>
    <property type="evidence" value="ECO:0007669"/>
    <property type="project" value="InterPro"/>
</dbReference>
<dbReference type="GO" id="GO:0006357">
    <property type="term" value="P:regulation of transcription by RNA polymerase II"/>
    <property type="evidence" value="ECO:0007669"/>
    <property type="project" value="InterPro"/>
</dbReference>
<dbReference type="GO" id="GO:0009410">
    <property type="term" value="P:response to xenobiotic stimulus"/>
    <property type="evidence" value="ECO:0000314"/>
    <property type="project" value="CGD"/>
</dbReference>
<dbReference type="CDD" id="cd12191">
    <property type="entry name" value="gal11_coact"/>
    <property type="match status" value="1"/>
</dbReference>
<dbReference type="Gene3D" id="1.10.287.2920">
    <property type="match status" value="1"/>
</dbReference>
<dbReference type="Gene3D" id="1.10.246.20">
    <property type="entry name" value="Coactivator CBP, KIX domain"/>
    <property type="match status" value="1"/>
</dbReference>
<dbReference type="InterPro" id="IPR033789">
    <property type="entry name" value="Gal11_coact"/>
</dbReference>
<dbReference type="InterPro" id="IPR036529">
    <property type="entry name" value="KIX_dom_sf"/>
</dbReference>
<dbReference type="InterPro" id="IPR036546">
    <property type="entry name" value="MED15_KIX"/>
</dbReference>
<dbReference type="InterPro" id="IPR008626">
    <property type="entry name" value="Mediator_Med15_fun"/>
</dbReference>
<dbReference type="Pfam" id="PF18535">
    <property type="entry name" value="Gal11_ABD1"/>
    <property type="match status" value="1"/>
</dbReference>
<dbReference type="Pfam" id="PF16987">
    <property type="entry name" value="KIX_2"/>
    <property type="match status" value="1"/>
</dbReference>
<dbReference type="Pfam" id="PF05397">
    <property type="entry name" value="Med15_fungi"/>
    <property type="match status" value="1"/>
</dbReference>
<dbReference type="SUPFAM" id="SSF47040">
    <property type="entry name" value="Kix domain of CBP (creb binding protein)"/>
    <property type="match status" value="1"/>
</dbReference>
<proteinExistence type="evidence at protein level"/>
<name>MED15_CANGA</name>
<accession>Q6FRS9</accession>
<keyword id="KW-0002">3D-structure</keyword>
<keyword id="KW-0010">Activator</keyword>
<keyword id="KW-0539">Nucleus</keyword>
<keyword id="KW-1185">Reference proteome</keyword>
<keyword id="KW-0804">Transcription</keyword>
<keyword id="KW-0805">Transcription regulation</keyword>